<accession>Q8S4Y1</accession>
<accession>Q93YW6</accession>
<accession>Q9LUB1</accession>
<protein>
    <recommendedName>
        <fullName evidence="10">Acetyl-CoA acetyltransferase 2</fullName>
        <ecNumber evidence="6">2.3.1.9</ecNumber>
    </recommendedName>
    <alternativeName>
        <fullName evidence="8">Acetoacetyl-CoA thiolase 2</fullName>
        <shortName evidence="10">Thiolase 2</shortName>
    </alternativeName>
    <alternativeName>
        <fullName evidence="10">Protein EMBRYO DEFECTIVE 1276</fullName>
    </alternativeName>
</protein>
<proteinExistence type="evidence at protein level"/>
<name>ACCT2_ARATH</name>
<reference key="1">
    <citation type="submission" date="2001-03" db="EMBL/GenBank/DDBJ databases">
        <title>Arabidopsis thaliana mRNA encoding cytosolic acetoacetyl-CoA thiolase, the first enzyme of the mevalonate pathway for isoprenoid biosynthesis.</title>
        <authorList>
            <person name="Ahumada I."/>
            <person name="Boronat A."/>
            <person name="Campos N."/>
        </authorList>
    </citation>
    <scope>NUCLEOTIDE SEQUENCE [MRNA] (ISOFORM 1)</scope>
</reference>
<reference key="2">
    <citation type="journal article" date="2000" name="DNA Res.">
        <title>Structural analysis of Arabidopsis thaliana chromosome 5. X. Sequence features of the regions of 3,076,755 bp covered by sixty P1 and TAC clones.</title>
        <authorList>
            <person name="Sato S."/>
            <person name="Nakamura Y."/>
            <person name="Kaneko T."/>
            <person name="Katoh T."/>
            <person name="Asamizu E."/>
            <person name="Kotani H."/>
            <person name="Tabata S."/>
        </authorList>
    </citation>
    <scope>NUCLEOTIDE SEQUENCE [LARGE SCALE GENOMIC DNA]</scope>
    <source>
        <strain>cv. Columbia</strain>
    </source>
</reference>
<reference key="3">
    <citation type="journal article" date="2017" name="Plant J.">
        <title>Araport11: a complete reannotation of the Arabidopsis thaliana reference genome.</title>
        <authorList>
            <person name="Cheng C.Y."/>
            <person name="Krishnakumar V."/>
            <person name="Chan A.P."/>
            <person name="Thibaud-Nissen F."/>
            <person name="Schobel S."/>
            <person name="Town C.D."/>
        </authorList>
    </citation>
    <scope>GENOME REANNOTATION</scope>
    <source>
        <strain>cv. Columbia</strain>
    </source>
</reference>
<reference key="4">
    <citation type="journal article" date="2003" name="Science">
        <title>Empirical analysis of transcriptional activity in the Arabidopsis genome.</title>
        <authorList>
            <person name="Yamada K."/>
            <person name="Lim J."/>
            <person name="Dale J.M."/>
            <person name="Chen H."/>
            <person name="Shinn P."/>
            <person name="Palm C.J."/>
            <person name="Southwick A.M."/>
            <person name="Wu H.C."/>
            <person name="Kim C.J."/>
            <person name="Nguyen M."/>
            <person name="Pham P.K."/>
            <person name="Cheuk R.F."/>
            <person name="Karlin-Newmann G."/>
            <person name="Liu S.X."/>
            <person name="Lam B."/>
            <person name="Sakano H."/>
            <person name="Wu T."/>
            <person name="Yu G."/>
            <person name="Miranda M."/>
            <person name="Quach H.L."/>
            <person name="Tripp M."/>
            <person name="Chang C.H."/>
            <person name="Lee J.M."/>
            <person name="Toriumi M.J."/>
            <person name="Chan M.M."/>
            <person name="Tang C.C."/>
            <person name="Onodera C.S."/>
            <person name="Deng J.M."/>
            <person name="Akiyama K."/>
            <person name="Ansari Y."/>
            <person name="Arakawa T."/>
            <person name="Banh J."/>
            <person name="Banno F."/>
            <person name="Bowser L."/>
            <person name="Brooks S.Y."/>
            <person name="Carninci P."/>
            <person name="Chao Q."/>
            <person name="Choy N."/>
            <person name="Enju A."/>
            <person name="Goldsmith A.D."/>
            <person name="Gurjal M."/>
            <person name="Hansen N.F."/>
            <person name="Hayashizaki Y."/>
            <person name="Johnson-Hopson C."/>
            <person name="Hsuan V.W."/>
            <person name="Iida K."/>
            <person name="Karnes M."/>
            <person name="Khan S."/>
            <person name="Koesema E."/>
            <person name="Ishida J."/>
            <person name="Jiang P.X."/>
            <person name="Jones T."/>
            <person name="Kawai J."/>
            <person name="Kamiya A."/>
            <person name="Meyers C."/>
            <person name="Nakajima M."/>
            <person name="Narusaka M."/>
            <person name="Seki M."/>
            <person name="Sakurai T."/>
            <person name="Satou M."/>
            <person name="Tamse R."/>
            <person name="Vaysberg M."/>
            <person name="Wallender E.K."/>
            <person name="Wong C."/>
            <person name="Yamamura Y."/>
            <person name="Yuan S."/>
            <person name="Shinozaki K."/>
            <person name="Davis R.W."/>
            <person name="Theologis A."/>
            <person name="Ecker J.R."/>
        </authorList>
    </citation>
    <scope>NUCLEOTIDE SEQUENCE [LARGE SCALE MRNA] (ISOFORM 2)</scope>
    <source>
        <strain>cv. Columbia</strain>
    </source>
</reference>
<reference key="5">
    <citation type="journal article" date="2007" name="Plant Cell">
        <title>Proteome analysis of Arabidopsis leaf peroxisomes reveals novel targeting peptides, metabolic pathways, and defense mechanisms.</title>
        <authorList>
            <person name="Reumann S."/>
            <person name="Babujee L."/>
            <person name="Ma C."/>
            <person name="Wienkoop S."/>
            <person name="Siemsen T."/>
            <person name="Antonicelli G.E."/>
            <person name="Rasche N."/>
            <person name="Lueder F."/>
            <person name="Weckwerth W."/>
            <person name="Jahn O."/>
        </authorList>
    </citation>
    <scope>IDENTIFICATION BY MASS SPECTROMETRY</scope>
</reference>
<reference key="6">
    <citation type="journal article" date="2004" name="Plant Physiol.">
        <title>Identification of genes required for embryo development in Arabidopsis.</title>
        <authorList>
            <person name="Tzafrir I."/>
            <person name="Pena-Muralla R."/>
            <person name="Dickerman A."/>
            <person name="Berg M."/>
            <person name="Rogers R."/>
            <person name="Hutchens S."/>
            <person name="Sweeney T.C."/>
            <person name="McElver J."/>
            <person name="Aux G."/>
            <person name="Patton D."/>
            <person name="Meinke D."/>
        </authorList>
    </citation>
    <scope>FUNCTION</scope>
    <scope>DISRUPTION PHENOTYPE</scope>
</reference>
<reference key="7">
    <citation type="journal article" date="2007" name="Plant Mol. Biol.">
        <title>Nine 3-ketoacyl-CoA thiolases (KATs) and acetoacetyl-CoA thiolases (ACATs) encoded by five genes in Arabidopsis thaliana are targeted either to peroxisomes or cytosol but not to mitochondria.</title>
        <authorList>
            <person name="Carrie C."/>
            <person name="Murcha M.W."/>
            <person name="Millar A.H."/>
            <person name="Smith S.M."/>
            <person name="Whelan J."/>
        </authorList>
    </citation>
    <scope>SUBCELLULAR LOCATION</scope>
</reference>
<reference key="8">
    <citation type="journal article" date="2012" name="Plant J.">
        <title>Reverse genetic characterization of two paralogous acetoacetyl CoA thiolase genes in Arabidopsis reveals their importance in plant growth and development.</title>
        <authorList>
            <person name="Jin H."/>
            <person name="Song Z."/>
            <person name="Nikolau B.J."/>
        </authorList>
    </citation>
    <scope>FUNCTION</scope>
    <scope>CATALYTIC ACTIVITY</scope>
    <scope>BIOPHYSICOCHEMICAL PROPERTIES</scope>
    <scope>TISSUE SPECIFICITY</scope>
</reference>
<comment type="function">
    <text evidence="4 6">Catalyzes the condensation of two molecules of acetyl-CoA to produce acetoacetyl-CoA (PubMed:22332816). Generates the bulk of the acetoacetyl-CoA precursor required for the cytosol-localized, mevalonate-derived isoprenoid biosynthesis (PubMed:22332816). The generated isoprenoids are required for normal growth and development (PubMed:22332816). Essential protein during embryogenesis (PubMed:15266054).</text>
</comment>
<comment type="catalytic activity">
    <reaction evidence="6">
        <text>2 acetyl-CoA = acetoacetyl-CoA + CoA</text>
        <dbReference type="Rhea" id="RHEA:21036"/>
        <dbReference type="ChEBI" id="CHEBI:57286"/>
        <dbReference type="ChEBI" id="CHEBI:57287"/>
        <dbReference type="ChEBI" id="CHEBI:57288"/>
        <dbReference type="EC" id="2.3.1.9"/>
    </reaction>
    <physiologicalReaction direction="left-to-right" evidence="6">
        <dbReference type="Rhea" id="RHEA:21037"/>
    </physiologicalReaction>
</comment>
<comment type="biophysicochemical properties">
    <kinetics>
        <KM evidence="6">1.3 mM for acetyl-CoA</KM>
        <Vmax evidence="6">11.3 umol/min/mg enzyme with acetyl-CoA as substrate</Vmax>
    </kinetics>
</comment>
<comment type="pathway">
    <text evidence="10">Metabolic intermediate biosynthesis; (R)-mevalonate biosynthesis; (R)-mevalonate from acetyl-CoA: step 1/3.</text>
</comment>
<comment type="subcellular location">
    <subcellularLocation>
        <location evidence="5">Cytoplasm</location>
    </subcellularLocation>
    <subcellularLocation>
        <location evidence="5">Peroxisome</location>
    </subcellularLocation>
</comment>
<comment type="alternative products">
    <event type="alternative splicing"/>
    <isoform>
        <id>Q8S4Y1-1</id>
        <name>1</name>
        <sequence type="displayed"/>
    </isoform>
    <isoform>
        <id>Q8S4Y1-2</id>
        <name>2</name>
        <sequence type="described" ref="VSP_015461"/>
    </isoform>
</comment>
<comment type="tissue specificity">
    <text evidence="6">Expressed in root tips, emerging leaves, young leaves, stems, and anthers at the microspore stage.</text>
</comment>
<comment type="disruption phenotype">
    <text evidence="4 6">Embryo defective and lethality when homozygous.</text>
</comment>
<comment type="miscellaneous">
    <molecule>Isoform 2</molecule>
    <text evidence="10">May be due to a competing donor splice site.</text>
</comment>
<comment type="similarity">
    <text evidence="10">Belongs to the thiolase-like superfamily. Thiolase family.</text>
</comment>
<comment type="sequence caution" evidence="10">
    <conflict type="erroneous gene model prediction">
        <sequence resource="EMBL-CDS" id="BAA97003"/>
    </conflict>
</comment>
<feature type="chain" id="PRO_0000206411" description="Acetyl-CoA acetyltransferase 2">
    <location>
        <begin position="1"/>
        <end position="403"/>
    </location>
</feature>
<feature type="active site" description="Acyl-thioester intermediate" evidence="1">
    <location>
        <position position="97"/>
    </location>
</feature>
<feature type="active site" description="Proton acceptor" evidence="3">
    <location>
        <position position="359"/>
    </location>
</feature>
<feature type="active site" description="Proton acceptor" evidence="3">
    <location>
        <position position="389"/>
    </location>
</feature>
<feature type="binding site" evidence="2">
    <location>
        <position position="237"/>
    </location>
    <ligand>
        <name>CoA</name>
        <dbReference type="ChEBI" id="CHEBI:57287"/>
    </ligand>
</feature>
<feature type="binding site" evidence="2">
    <location>
        <position position="254"/>
    </location>
    <ligand>
        <name>K(+)</name>
        <dbReference type="ChEBI" id="CHEBI:29103"/>
    </ligand>
</feature>
<feature type="binding site" evidence="2">
    <location>
        <position position="258"/>
    </location>
    <ligand>
        <name>CoA</name>
        <dbReference type="ChEBI" id="CHEBI:57287"/>
    </ligand>
</feature>
<feature type="binding site" evidence="2">
    <location>
        <position position="355"/>
    </location>
    <ligand>
        <name>K(+)</name>
        <dbReference type="ChEBI" id="CHEBI:29103"/>
    </ligand>
</feature>
<feature type="splice variant" id="VSP_015461" description="In isoform 2." evidence="7">
    <original>MAHTSESVNPR</original>
    <variation>MNVDES</variation>
    <location>
        <begin position="1"/>
        <end position="11"/>
    </location>
</feature>
<evidence type="ECO:0000250" key="1">
    <source>
        <dbReference type="UniProtKB" id="P24752"/>
    </source>
</evidence>
<evidence type="ECO:0000250" key="2">
    <source>
        <dbReference type="UniProtKB" id="Q4WCL5"/>
    </source>
</evidence>
<evidence type="ECO:0000255" key="3">
    <source>
        <dbReference type="PROSITE-ProRule" id="PRU10020"/>
    </source>
</evidence>
<evidence type="ECO:0000269" key="4">
    <source>
    </source>
</evidence>
<evidence type="ECO:0000269" key="5">
    <source>
    </source>
</evidence>
<evidence type="ECO:0000269" key="6">
    <source>
    </source>
</evidence>
<evidence type="ECO:0000303" key="7">
    <source>
    </source>
</evidence>
<evidence type="ECO:0000303" key="8">
    <source>
    </source>
</evidence>
<evidence type="ECO:0000303" key="9">
    <source ref="1"/>
</evidence>
<evidence type="ECO:0000305" key="10"/>
<evidence type="ECO:0000312" key="11">
    <source>
        <dbReference type="Araport" id="AT5G48230"/>
    </source>
</evidence>
<evidence type="ECO:0000312" key="12">
    <source>
        <dbReference type="EMBL" id="BAA97003.1"/>
    </source>
</evidence>
<dbReference type="EC" id="2.3.1.9" evidence="6"/>
<dbReference type="EMBL" id="AF364059">
    <property type="protein sequence ID" value="AAM00280.1"/>
    <property type="molecule type" value="mRNA"/>
</dbReference>
<dbReference type="EMBL" id="AB023039">
    <property type="protein sequence ID" value="BAA97003.1"/>
    <property type="status" value="ALT_SEQ"/>
    <property type="molecule type" value="Genomic_DNA"/>
</dbReference>
<dbReference type="EMBL" id="CP002688">
    <property type="protein sequence ID" value="AED95638.1"/>
    <property type="molecule type" value="Genomic_DNA"/>
</dbReference>
<dbReference type="EMBL" id="CP002688">
    <property type="protein sequence ID" value="AED95639.1"/>
    <property type="molecule type" value="Genomic_DNA"/>
</dbReference>
<dbReference type="EMBL" id="AY059736">
    <property type="protein sequence ID" value="AAL24148.1"/>
    <property type="molecule type" value="mRNA"/>
</dbReference>
<dbReference type="EMBL" id="AY091271">
    <property type="protein sequence ID" value="AAM14210.1"/>
    <property type="molecule type" value="mRNA"/>
</dbReference>
<dbReference type="RefSeq" id="NP_568694.2">
    <molecule id="Q8S4Y1-1"/>
    <property type="nucleotide sequence ID" value="NM_124198.4"/>
</dbReference>
<dbReference type="RefSeq" id="NP_851154.1">
    <molecule id="Q8S4Y1-2"/>
    <property type="nucleotide sequence ID" value="NM_180823.3"/>
</dbReference>
<dbReference type="SMR" id="Q8S4Y1"/>
<dbReference type="BioGRID" id="20123">
    <property type="interactions" value="6"/>
</dbReference>
<dbReference type="FunCoup" id="Q8S4Y1">
    <property type="interactions" value="2818"/>
</dbReference>
<dbReference type="IntAct" id="Q8S4Y1">
    <property type="interactions" value="2"/>
</dbReference>
<dbReference type="STRING" id="3702.Q8S4Y1"/>
<dbReference type="iPTMnet" id="Q8S4Y1"/>
<dbReference type="PaxDb" id="3702-AT5G48230.2"/>
<dbReference type="ProteomicsDB" id="246414">
    <molecule id="Q8S4Y1-1"/>
</dbReference>
<dbReference type="EnsemblPlants" id="AT5G48230.1">
    <molecule id="Q8S4Y1-2"/>
    <property type="protein sequence ID" value="AT5G48230.1"/>
    <property type="gene ID" value="AT5G48230"/>
</dbReference>
<dbReference type="EnsemblPlants" id="AT5G48230.2">
    <molecule id="Q8S4Y1-1"/>
    <property type="protein sequence ID" value="AT5G48230.2"/>
    <property type="gene ID" value="AT5G48230"/>
</dbReference>
<dbReference type="GeneID" id="834876"/>
<dbReference type="Gramene" id="AT5G48230.1">
    <molecule id="Q8S4Y1-2"/>
    <property type="protein sequence ID" value="AT5G48230.1"/>
    <property type="gene ID" value="AT5G48230"/>
</dbReference>
<dbReference type="Gramene" id="AT5G48230.2">
    <molecule id="Q8S4Y1-1"/>
    <property type="protein sequence ID" value="AT5G48230.2"/>
    <property type="gene ID" value="AT5G48230"/>
</dbReference>
<dbReference type="KEGG" id="ath:AT5G48230"/>
<dbReference type="Araport" id="AT5G48230"/>
<dbReference type="TAIR" id="AT5G48230">
    <property type="gene designation" value="ACAT2"/>
</dbReference>
<dbReference type="eggNOG" id="KOG1390">
    <property type="taxonomic scope" value="Eukaryota"/>
</dbReference>
<dbReference type="HOGENOM" id="CLU_031026_0_0_1"/>
<dbReference type="InParanoid" id="Q8S4Y1"/>
<dbReference type="OMA" id="ICPSIAI"/>
<dbReference type="PhylomeDB" id="Q8S4Y1"/>
<dbReference type="BRENDA" id="2.3.1.9">
    <property type="organism ID" value="399"/>
</dbReference>
<dbReference type="UniPathway" id="UPA00058">
    <property type="reaction ID" value="UER00101"/>
</dbReference>
<dbReference type="PRO" id="PR:Q8S4Y1"/>
<dbReference type="Proteomes" id="UP000006548">
    <property type="component" value="Chromosome 5"/>
</dbReference>
<dbReference type="ExpressionAtlas" id="Q8S4Y1">
    <property type="expression patterns" value="baseline and differential"/>
</dbReference>
<dbReference type="GO" id="GO:0005777">
    <property type="term" value="C:peroxisome"/>
    <property type="evidence" value="ECO:0007005"/>
    <property type="project" value="TAIR"/>
</dbReference>
<dbReference type="GO" id="GO:0005886">
    <property type="term" value="C:plasma membrane"/>
    <property type="evidence" value="ECO:0007005"/>
    <property type="project" value="TAIR"/>
</dbReference>
<dbReference type="GO" id="GO:0009536">
    <property type="term" value="C:plastid"/>
    <property type="evidence" value="ECO:0007005"/>
    <property type="project" value="TAIR"/>
</dbReference>
<dbReference type="GO" id="GO:0003985">
    <property type="term" value="F:acetyl-CoA C-acetyltransferase activity"/>
    <property type="evidence" value="ECO:0000314"/>
    <property type="project" value="TAIR"/>
</dbReference>
<dbReference type="GO" id="GO:0046872">
    <property type="term" value="F:metal ion binding"/>
    <property type="evidence" value="ECO:0007669"/>
    <property type="project" value="UniProtKB-KW"/>
</dbReference>
<dbReference type="GO" id="GO:0008299">
    <property type="term" value="P:isoprenoid biosynthetic process"/>
    <property type="evidence" value="ECO:0007669"/>
    <property type="project" value="UniProtKB-KW"/>
</dbReference>
<dbReference type="GO" id="GO:0009846">
    <property type="term" value="P:pollen germination"/>
    <property type="evidence" value="ECO:0000315"/>
    <property type="project" value="TAIR"/>
</dbReference>
<dbReference type="GO" id="GO:0009860">
    <property type="term" value="P:pollen tube growth"/>
    <property type="evidence" value="ECO:0000315"/>
    <property type="project" value="TAIR"/>
</dbReference>
<dbReference type="GO" id="GO:0016125">
    <property type="term" value="P:sterol metabolic process"/>
    <property type="evidence" value="ECO:0000315"/>
    <property type="project" value="TAIR"/>
</dbReference>
<dbReference type="CDD" id="cd00751">
    <property type="entry name" value="thiolase"/>
    <property type="match status" value="1"/>
</dbReference>
<dbReference type="FunFam" id="3.40.47.10:FF:000007">
    <property type="entry name" value="acetyl-CoA acetyltransferase, mitochondrial"/>
    <property type="match status" value="1"/>
</dbReference>
<dbReference type="Gene3D" id="3.40.47.10">
    <property type="match status" value="1"/>
</dbReference>
<dbReference type="InterPro" id="IPR002155">
    <property type="entry name" value="Thiolase"/>
</dbReference>
<dbReference type="InterPro" id="IPR016039">
    <property type="entry name" value="Thiolase-like"/>
</dbReference>
<dbReference type="InterPro" id="IPR020615">
    <property type="entry name" value="Thiolase_acyl_enz_int_AS"/>
</dbReference>
<dbReference type="InterPro" id="IPR020610">
    <property type="entry name" value="Thiolase_AS"/>
</dbReference>
<dbReference type="InterPro" id="IPR020617">
    <property type="entry name" value="Thiolase_C"/>
</dbReference>
<dbReference type="InterPro" id="IPR020613">
    <property type="entry name" value="Thiolase_CS"/>
</dbReference>
<dbReference type="InterPro" id="IPR020616">
    <property type="entry name" value="Thiolase_N"/>
</dbReference>
<dbReference type="NCBIfam" id="TIGR01930">
    <property type="entry name" value="AcCoA-C-Actrans"/>
    <property type="match status" value="1"/>
</dbReference>
<dbReference type="PANTHER" id="PTHR18919:SF161">
    <property type="entry name" value="ACETYL-COA ACETYLTRANSFERASE 2"/>
    <property type="match status" value="1"/>
</dbReference>
<dbReference type="PANTHER" id="PTHR18919">
    <property type="entry name" value="ACETYL-COA C-ACYLTRANSFERASE"/>
    <property type="match status" value="1"/>
</dbReference>
<dbReference type="Pfam" id="PF02803">
    <property type="entry name" value="Thiolase_C"/>
    <property type="match status" value="1"/>
</dbReference>
<dbReference type="Pfam" id="PF00108">
    <property type="entry name" value="Thiolase_N"/>
    <property type="match status" value="1"/>
</dbReference>
<dbReference type="PIRSF" id="PIRSF000429">
    <property type="entry name" value="Ac-CoA_Ac_transf"/>
    <property type="match status" value="1"/>
</dbReference>
<dbReference type="SUPFAM" id="SSF53901">
    <property type="entry name" value="Thiolase-like"/>
    <property type="match status" value="2"/>
</dbReference>
<dbReference type="PROSITE" id="PS00098">
    <property type="entry name" value="THIOLASE_1"/>
    <property type="match status" value="1"/>
</dbReference>
<dbReference type="PROSITE" id="PS00737">
    <property type="entry name" value="THIOLASE_2"/>
    <property type="match status" value="1"/>
</dbReference>
<dbReference type="PROSITE" id="PS00099">
    <property type="entry name" value="THIOLASE_3"/>
    <property type="match status" value="1"/>
</dbReference>
<gene>
    <name evidence="8" type="primary">ACCT2</name>
    <name evidence="9" type="synonym">AAT1</name>
    <name evidence="10" type="synonym">EMB1276</name>
    <name evidence="11" type="ordered locus">At5g48230</name>
    <name evidence="12" type="ORF">MIF21.12</name>
</gene>
<organism>
    <name type="scientific">Arabidopsis thaliana</name>
    <name type="common">Mouse-ear cress</name>
    <dbReference type="NCBI Taxonomy" id="3702"/>
    <lineage>
        <taxon>Eukaryota</taxon>
        <taxon>Viridiplantae</taxon>
        <taxon>Streptophyta</taxon>
        <taxon>Embryophyta</taxon>
        <taxon>Tracheophyta</taxon>
        <taxon>Spermatophyta</taxon>
        <taxon>Magnoliopsida</taxon>
        <taxon>eudicotyledons</taxon>
        <taxon>Gunneridae</taxon>
        <taxon>Pentapetalae</taxon>
        <taxon>rosids</taxon>
        <taxon>malvids</taxon>
        <taxon>Brassicales</taxon>
        <taxon>Brassicaceae</taxon>
        <taxon>Camelineae</taxon>
        <taxon>Arabidopsis</taxon>
    </lineage>
</organism>
<sequence>MAHTSESVNPRDVCIVGVARTPMGGFLGSLSSLPATKLGSLAIAAALKRANVDPALVQEVVFGNVLSANLGQAPARQAALGAGIPNSVICTTVNKVCASGMKAVMIAAQSIQLGINDVVVAGGMESMSNTPKYLAEARKGSRFGHDSLVDGMLKDGLWDVYNDCGMGSCAELCAEKFQITREQQDDYAVQSFERGIAAQEAGAFTWEIVPVEVSGGRGRPSTIVDKDEGLGKFDAAKLRKLRPSFKENGGTVTAGNASSISDGAAALVLVSGEKALQLGLLVLAKIKGYGDAAQEPEFFTTAPALAIPKAIAHAGLESSQVDYYEINEAFAVVALANQKLLGIAPEKVNVNGGAVSLGHPLGCSGARILITLLGILKKRNGKYGVGGVCNGGGGASALVLELL</sequence>
<keyword id="KW-0012">Acyltransferase</keyword>
<keyword id="KW-0025">Alternative splicing</keyword>
<keyword id="KW-0963">Cytoplasm</keyword>
<keyword id="KW-0414">Isoprene biosynthesis</keyword>
<keyword id="KW-0479">Metal-binding</keyword>
<keyword id="KW-0576">Peroxisome</keyword>
<keyword id="KW-0630">Potassium</keyword>
<keyword id="KW-1185">Reference proteome</keyword>
<keyword id="KW-0808">Transferase</keyword>